<name>MURD_LEPIN</name>
<sequence>MKFPESLKGLKILVLGGGISGNSALNFLISEKAQPILCDQNQPERTVVPFFPDNIPPQSLPEVSLVIKSPGILPTHPILSYAADKKIPVVSEIDLGRYFFKGKIIGITGTDGKSTTTSLIAHLLKESFPDLKEGGNLGIPFTSFCKESISLAVLELSSYQLEDSSPLHLDVSVFLNLASDHLERHKTMENYFQAKLKIADLSNSNHTLIVSEKIKERILNSISYQCKLLSFGKTSDSNAFLDENSLKIKTSKFVYDISKFYLPGTHNRENLAASILAAEEIGGKPESIQTRIPLFRGLPHRFQIAGEKLGISFINDSKSTNLHSMLAGMATWKNIDQTCLILGGRPKQEDLKPLYNFLIRGIGCVVLFGEARATWESGIKNIIGEKLYCVENLNDTFEIFKKGNIFPVPGLNKDIIIRLSDSISISSFVFSPACASFDQYKNFEERGNHFLSLVNDFLDQIDS</sequence>
<protein>
    <recommendedName>
        <fullName evidence="1">UDP-N-acetylmuramoylalanine--D-glutamate ligase</fullName>
        <ecNumber evidence="1">6.3.2.9</ecNumber>
    </recommendedName>
    <alternativeName>
        <fullName evidence="1">D-glutamic acid-adding enzyme</fullName>
    </alternativeName>
    <alternativeName>
        <fullName evidence="1">UDP-N-acetylmuramoyl-L-alanyl-D-glutamate synthetase</fullName>
    </alternativeName>
</protein>
<proteinExistence type="inferred from homology"/>
<feature type="chain" id="PRO_0000109036" description="UDP-N-acetylmuramoylalanine--D-glutamate ligase">
    <location>
        <begin position="1"/>
        <end position="463"/>
    </location>
</feature>
<feature type="binding site" evidence="1">
    <location>
        <begin position="109"/>
        <end position="115"/>
    </location>
    <ligand>
        <name>ATP</name>
        <dbReference type="ChEBI" id="CHEBI:30616"/>
    </ligand>
</feature>
<comment type="function">
    <text evidence="1">Cell wall formation. Catalyzes the addition of glutamate to the nucleotide precursor UDP-N-acetylmuramoyl-L-alanine (UMA).</text>
</comment>
<comment type="catalytic activity">
    <reaction evidence="1">
        <text>UDP-N-acetyl-alpha-D-muramoyl-L-alanine + D-glutamate + ATP = UDP-N-acetyl-alpha-D-muramoyl-L-alanyl-D-glutamate + ADP + phosphate + H(+)</text>
        <dbReference type="Rhea" id="RHEA:16429"/>
        <dbReference type="ChEBI" id="CHEBI:15378"/>
        <dbReference type="ChEBI" id="CHEBI:29986"/>
        <dbReference type="ChEBI" id="CHEBI:30616"/>
        <dbReference type="ChEBI" id="CHEBI:43474"/>
        <dbReference type="ChEBI" id="CHEBI:83898"/>
        <dbReference type="ChEBI" id="CHEBI:83900"/>
        <dbReference type="ChEBI" id="CHEBI:456216"/>
        <dbReference type="EC" id="6.3.2.9"/>
    </reaction>
</comment>
<comment type="pathway">
    <text evidence="1">Cell wall biogenesis; peptidoglycan biosynthesis.</text>
</comment>
<comment type="subcellular location">
    <subcellularLocation>
        <location evidence="1">Cytoplasm</location>
    </subcellularLocation>
</comment>
<comment type="similarity">
    <text evidence="1">Belongs to the MurCDEF family.</text>
</comment>
<dbReference type="EC" id="6.3.2.9" evidence="1"/>
<dbReference type="EMBL" id="AE010300">
    <property type="protein sequence ID" value="AAN48037.1"/>
    <property type="molecule type" value="Genomic_DNA"/>
</dbReference>
<dbReference type="RefSeq" id="NP_711019.1">
    <property type="nucleotide sequence ID" value="NC_004342.2"/>
</dbReference>
<dbReference type="RefSeq" id="WP_000671544.1">
    <property type="nucleotide sequence ID" value="NC_004342.2"/>
</dbReference>
<dbReference type="SMR" id="Q8F7V4"/>
<dbReference type="FunCoup" id="Q8F7V4">
    <property type="interactions" value="423"/>
</dbReference>
<dbReference type="STRING" id="189518.LA_0838"/>
<dbReference type="BindingDB" id="Q8F7V4"/>
<dbReference type="PaxDb" id="189518-LA_0838"/>
<dbReference type="EnsemblBacteria" id="AAN48037">
    <property type="protein sequence ID" value="AAN48037"/>
    <property type="gene ID" value="LA_0838"/>
</dbReference>
<dbReference type="KEGG" id="lil:LA_0838"/>
<dbReference type="PATRIC" id="fig|189518.3.peg.843"/>
<dbReference type="HOGENOM" id="CLU_032540_1_0_12"/>
<dbReference type="InParanoid" id="Q8F7V4"/>
<dbReference type="OrthoDB" id="9809796at2"/>
<dbReference type="BRENDA" id="6.3.2.9">
    <property type="organism ID" value="2986"/>
</dbReference>
<dbReference type="UniPathway" id="UPA00219"/>
<dbReference type="Proteomes" id="UP000001408">
    <property type="component" value="Chromosome I"/>
</dbReference>
<dbReference type="GO" id="GO:0005737">
    <property type="term" value="C:cytoplasm"/>
    <property type="evidence" value="ECO:0007669"/>
    <property type="project" value="UniProtKB-SubCell"/>
</dbReference>
<dbReference type="GO" id="GO:0005524">
    <property type="term" value="F:ATP binding"/>
    <property type="evidence" value="ECO:0007669"/>
    <property type="project" value="UniProtKB-UniRule"/>
</dbReference>
<dbReference type="GO" id="GO:0008764">
    <property type="term" value="F:UDP-N-acetylmuramoylalanine-D-glutamate ligase activity"/>
    <property type="evidence" value="ECO:0007669"/>
    <property type="project" value="UniProtKB-UniRule"/>
</dbReference>
<dbReference type="GO" id="GO:0051301">
    <property type="term" value="P:cell division"/>
    <property type="evidence" value="ECO:0007669"/>
    <property type="project" value="UniProtKB-KW"/>
</dbReference>
<dbReference type="GO" id="GO:0071555">
    <property type="term" value="P:cell wall organization"/>
    <property type="evidence" value="ECO:0007669"/>
    <property type="project" value="UniProtKB-KW"/>
</dbReference>
<dbReference type="GO" id="GO:0009252">
    <property type="term" value="P:peptidoglycan biosynthetic process"/>
    <property type="evidence" value="ECO:0007669"/>
    <property type="project" value="UniProtKB-UniRule"/>
</dbReference>
<dbReference type="GO" id="GO:0008360">
    <property type="term" value="P:regulation of cell shape"/>
    <property type="evidence" value="ECO:0007669"/>
    <property type="project" value="UniProtKB-KW"/>
</dbReference>
<dbReference type="Gene3D" id="3.90.190.20">
    <property type="entry name" value="Mur ligase, C-terminal domain"/>
    <property type="match status" value="1"/>
</dbReference>
<dbReference type="Gene3D" id="3.40.1190.10">
    <property type="entry name" value="Mur-like, catalytic domain"/>
    <property type="match status" value="1"/>
</dbReference>
<dbReference type="Gene3D" id="3.40.50.720">
    <property type="entry name" value="NAD(P)-binding Rossmann-like Domain"/>
    <property type="match status" value="1"/>
</dbReference>
<dbReference type="HAMAP" id="MF_00639">
    <property type="entry name" value="MurD"/>
    <property type="match status" value="1"/>
</dbReference>
<dbReference type="InterPro" id="IPR036565">
    <property type="entry name" value="Mur-like_cat_sf"/>
</dbReference>
<dbReference type="InterPro" id="IPR036615">
    <property type="entry name" value="Mur_ligase_C_dom_sf"/>
</dbReference>
<dbReference type="InterPro" id="IPR013221">
    <property type="entry name" value="Mur_ligase_cen"/>
</dbReference>
<dbReference type="InterPro" id="IPR005762">
    <property type="entry name" value="MurD"/>
</dbReference>
<dbReference type="NCBIfam" id="TIGR01087">
    <property type="entry name" value="murD"/>
    <property type="match status" value="1"/>
</dbReference>
<dbReference type="PANTHER" id="PTHR43692">
    <property type="entry name" value="UDP-N-ACETYLMURAMOYLALANINE--D-GLUTAMATE LIGASE"/>
    <property type="match status" value="1"/>
</dbReference>
<dbReference type="PANTHER" id="PTHR43692:SF1">
    <property type="entry name" value="UDP-N-ACETYLMURAMOYLALANINE--D-GLUTAMATE LIGASE"/>
    <property type="match status" value="1"/>
</dbReference>
<dbReference type="Pfam" id="PF08245">
    <property type="entry name" value="Mur_ligase_M"/>
    <property type="match status" value="1"/>
</dbReference>
<dbReference type="Pfam" id="PF21799">
    <property type="entry name" value="MurD-like_N"/>
    <property type="match status" value="1"/>
</dbReference>
<dbReference type="SUPFAM" id="SSF51984">
    <property type="entry name" value="MurCD N-terminal domain"/>
    <property type="match status" value="1"/>
</dbReference>
<dbReference type="SUPFAM" id="SSF53623">
    <property type="entry name" value="MurD-like peptide ligases, catalytic domain"/>
    <property type="match status" value="1"/>
</dbReference>
<dbReference type="SUPFAM" id="SSF53244">
    <property type="entry name" value="MurD-like peptide ligases, peptide-binding domain"/>
    <property type="match status" value="1"/>
</dbReference>
<evidence type="ECO:0000255" key="1">
    <source>
        <dbReference type="HAMAP-Rule" id="MF_00639"/>
    </source>
</evidence>
<gene>
    <name evidence="1" type="primary">murD</name>
    <name type="ordered locus">LA_0838</name>
</gene>
<keyword id="KW-0067">ATP-binding</keyword>
<keyword id="KW-0131">Cell cycle</keyword>
<keyword id="KW-0132">Cell division</keyword>
<keyword id="KW-0133">Cell shape</keyword>
<keyword id="KW-0961">Cell wall biogenesis/degradation</keyword>
<keyword id="KW-0963">Cytoplasm</keyword>
<keyword id="KW-0436">Ligase</keyword>
<keyword id="KW-0547">Nucleotide-binding</keyword>
<keyword id="KW-0573">Peptidoglycan synthesis</keyword>
<keyword id="KW-1185">Reference proteome</keyword>
<accession>Q8F7V4</accession>
<reference key="1">
    <citation type="journal article" date="2003" name="Nature">
        <title>Unique physiological and pathogenic features of Leptospira interrogans revealed by whole-genome sequencing.</title>
        <authorList>
            <person name="Ren S.-X."/>
            <person name="Fu G."/>
            <person name="Jiang X.-G."/>
            <person name="Zeng R."/>
            <person name="Miao Y.-G."/>
            <person name="Xu H."/>
            <person name="Zhang Y.-X."/>
            <person name="Xiong H."/>
            <person name="Lu G."/>
            <person name="Lu L.-F."/>
            <person name="Jiang H.-Q."/>
            <person name="Jia J."/>
            <person name="Tu Y.-F."/>
            <person name="Jiang J.-X."/>
            <person name="Gu W.-Y."/>
            <person name="Zhang Y.-Q."/>
            <person name="Cai Z."/>
            <person name="Sheng H.-H."/>
            <person name="Yin H.-F."/>
            <person name="Zhang Y."/>
            <person name="Zhu G.-F."/>
            <person name="Wan M."/>
            <person name="Huang H.-L."/>
            <person name="Qian Z."/>
            <person name="Wang S.-Y."/>
            <person name="Ma W."/>
            <person name="Yao Z.-J."/>
            <person name="Shen Y."/>
            <person name="Qiang B.-Q."/>
            <person name="Xia Q.-C."/>
            <person name="Guo X.-K."/>
            <person name="Danchin A."/>
            <person name="Saint Girons I."/>
            <person name="Somerville R.L."/>
            <person name="Wen Y.-M."/>
            <person name="Shi M.-H."/>
            <person name="Chen Z."/>
            <person name="Xu J.-G."/>
            <person name="Zhao G.-P."/>
        </authorList>
    </citation>
    <scope>NUCLEOTIDE SEQUENCE [LARGE SCALE GENOMIC DNA]</scope>
    <source>
        <strain>56601</strain>
    </source>
</reference>
<organism>
    <name type="scientific">Leptospira interrogans serogroup Icterohaemorrhagiae serovar Lai (strain 56601)</name>
    <dbReference type="NCBI Taxonomy" id="189518"/>
    <lineage>
        <taxon>Bacteria</taxon>
        <taxon>Pseudomonadati</taxon>
        <taxon>Spirochaetota</taxon>
        <taxon>Spirochaetia</taxon>
        <taxon>Leptospirales</taxon>
        <taxon>Leptospiraceae</taxon>
        <taxon>Leptospira</taxon>
    </lineage>
</organism>